<name>EPHB3_CHICK</name>
<dbReference type="EC" id="2.7.10.1"/>
<dbReference type="EMBL" id="Z19061">
    <property type="protein sequence ID" value="CAA79511.1"/>
    <property type="molecule type" value="mRNA"/>
</dbReference>
<dbReference type="PIR" id="I50611">
    <property type="entry name" value="I50611"/>
</dbReference>
<dbReference type="SMR" id="Q07498"/>
<dbReference type="FunCoup" id="Q07498">
    <property type="interactions" value="960"/>
</dbReference>
<dbReference type="STRING" id="9031.ENSGALP00000038993"/>
<dbReference type="GlyCosmos" id="Q07498">
    <property type="glycosylation" value="2 sites, No reported glycans"/>
</dbReference>
<dbReference type="GlyGen" id="Q07498">
    <property type="glycosylation" value="3 sites"/>
</dbReference>
<dbReference type="PaxDb" id="9031-ENSGALP00000038993"/>
<dbReference type="VEuPathDB" id="HostDB:geneid_396179"/>
<dbReference type="eggNOG" id="KOG0196">
    <property type="taxonomic scope" value="Eukaryota"/>
</dbReference>
<dbReference type="InParanoid" id="Q07498"/>
<dbReference type="OrthoDB" id="4062651at2759"/>
<dbReference type="PhylomeDB" id="Q07498"/>
<dbReference type="Proteomes" id="UP000000539">
    <property type="component" value="Unassembled WGS sequence"/>
</dbReference>
<dbReference type="GO" id="GO:0030425">
    <property type="term" value="C:dendrite"/>
    <property type="evidence" value="ECO:0000318"/>
    <property type="project" value="GO_Central"/>
</dbReference>
<dbReference type="GO" id="GO:0005886">
    <property type="term" value="C:plasma membrane"/>
    <property type="evidence" value="ECO:0000250"/>
    <property type="project" value="UniProtKB"/>
</dbReference>
<dbReference type="GO" id="GO:0005524">
    <property type="term" value="F:ATP binding"/>
    <property type="evidence" value="ECO:0007669"/>
    <property type="project" value="UniProtKB-KW"/>
</dbReference>
<dbReference type="GO" id="GO:0005003">
    <property type="term" value="F:ephrin receptor activity"/>
    <property type="evidence" value="ECO:0000250"/>
    <property type="project" value="UniProtKB"/>
</dbReference>
<dbReference type="GO" id="GO:0005005">
    <property type="term" value="F:transmembrane-ephrin receptor activity"/>
    <property type="evidence" value="ECO:0000318"/>
    <property type="project" value="GO_Central"/>
</dbReference>
<dbReference type="GO" id="GO:0007411">
    <property type="term" value="P:axon guidance"/>
    <property type="evidence" value="ECO:0000250"/>
    <property type="project" value="UniProtKB"/>
</dbReference>
<dbReference type="GO" id="GO:0007413">
    <property type="term" value="P:axonal fasciculation"/>
    <property type="evidence" value="ECO:0000250"/>
    <property type="project" value="UniProtKB"/>
</dbReference>
<dbReference type="GO" id="GO:0016477">
    <property type="term" value="P:cell migration"/>
    <property type="evidence" value="ECO:0000250"/>
    <property type="project" value="UniProtKB"/>
</dbReference>
<dbReference type="GO" id="GO:0060996">
    <property type="term" value="P:dendritic spine development"/>
    <property type="evidence" value="ECO:0000250"/>
    <property type="project" value="UniProtKB"/>
</dbReference>
<dbReference type="GO" id="GO:0060997">
    <property type="term" value="P:dendritic spine morphogenesis"/>
    <property type="evidence" value="ECO:0000250"/>
    <property type="project" value="UniProtKB"/>
</dbReference>
<dbReference type="GO" id="GO:0048013">
    <property type="term" value="P:ephrin receptor signaling pathway"/>
    <property type="evidence" value="ECO:0000250"/>
    <property type="project" value="UniProtKB"/>
</dbReference>
<dbReference type="GO" id="GO:0051965">
    <property type="term" value="P:positive regulation of synapse assembly"/>
    <property type="evidence" value="ECO:0000250"/>
    <property type="project" value="UniProtKB"/>
</dbReference>
<dbReference type="GO" id="GO:0046777">
    <property type="term" value="P:protein autophosphorylation"/>
    <property type="evidence" value="ECO:0000250"/>
    <property type="project" value="UniProtKB"/>
</dbReference>
<dbReference type="GO" id="GO:0050770">
    <property type="term" value="P:regulation of axonogenesis"/>
    <property type="evidence" value="ECO:0000250"/>
    <property type="project" value="UniProtKB"/>
</dbReference>
<dbReference type="GO" id="GO:0022407">
    <property type="term" value="P:regulation of cell-cell adhesion"/>
    <property type="evidence" value="ECO:0000250"/>
    <property type="project" value="UniProtKB"/>
</dbReference>
<dbReference type="GO" id="GO:0043087">
    <property type="term" value="P:regulation of GTPase activity"/>
    <property type="evidence" value="ECO:0000250"/>
    <property type="project" value="UniProtKB"/>
</dbReference>
<dbReference type="GO" id="GO:0034446">
    <property type="term" value="P:substrate adhesion-dependent cell spreading"/>
    <property type="evidence" value="ECO:0000250"/>
    <property type="project" value="UniProtKB"/>
</dbReference>
<dbReference type="CDD" id="cd10478">
    <property type="entry name" value="EphR_LBD_B3"/>
    <property type="match status" value="1"/>
</dbReference>
<dbReference type="CDD" id="cd00063">
    <property type="entry name" value="FN3"/>
    <property type="match status" value="2"/>
</dbReference>
<dbReference type="CDD" id="cd05065">
    <property type="entry name" value="PTKc_EphR_B"/>
    <property type="match status" value="1"/>
</dbReference>
<dbReference type="CDD" id="cd09553">
    <property type="entry name" value="SAM_EPH-B3"/>
    <property type="match status" value="1"/>
</dbReference>
<dbReference type="CDD" id="cd00185">
    <property type="entry name" value="TNFRSF"/>
    <property type="match status" value="1"/>
</dbReference>
<dbReference type="FunFam" id="2.60.40.10:FF:000041">
    <property type="entry name" value="ephrin type-A receptor 3"/>
    <property type="match status" value="1"/>
</dbReference>
<dbReference type="FunFam" id="1.10.150.50:FF:000001">
    <property type="entry name" value="Ephrin type-A receptor 5"/>
    <property type="match status" value="1"/>
</dbReference>
<dbReference type="FunFam" id="2.10.50.10:FF:000001">
    <property type="entry name" value="Ephrin type-A receptor 5"/>
    <property type="match status" value="1"/>
</dbReference>
<dbReference type="FunFam" id="2.60.40.1770:FF:000001">
    <property type="entry name" value="Ephrin type-A receptor 5"/>
    <property type="match status" value="1"/>
</dbReference>
<dbReference type="FunFam" id="3.30.200.20:FF:000001">
    <property type="entry name" value="Ephrin type-A receptor 5"/>
    <property type="match status" value="1"/>
</dbReference>
<dbReference type="FunFam" id="1.10.510.10:FF:000015">
    <property type="entry name" value="Ephrin type-B receptor 2"/>
    <property type="match status" value="1"/>
</dbReference>
<dbReference type="FunFam" id="2.60.120.260:FF:000004">
    <property type="entry name" value="Ephrin type-B receptor 2"/>
    <property type="match status" value="1"/>
</dbReference>
<dbReference type="FunFam" id="2.60.40.10:FF:000520">
    <property type="entry name" value="ephrin type-B receptor 3"/>
    <property type="match status" value="1"/>
</dbReference>
<dbReference type="Gene3D" id="2.60.40.1770">
    <property type="entry name" value="ephrin a2 ectodomain"/>
    <property type="match status" value="1"/>
</dbReference>
<dbReference type="Gene3D" id="2.60.120.260">
    <property type="entry name" value="Galactose-binding domain-like"/>
    <property type="match status" value="1"/>
</dbReference>
<dbReference type="Gene3D" id="2.60.40.10">
    <property type="entry name" value="Immunoglobulins"/>
    <property type="match status" value="2"/>
</dbReference>
<dbReference type="Gene3D" id="3.30.200.20">
    <property type="entry name" value="Phosphorylase Kinase, domain 1"/>
    <property type="match status" value="1"/>
</dbReference>
<dbReference type="Gene3D" id="1.10.150.50">
    <property type="entry name" value="Transcription Factor, Ets-1"/>
    <property type="match status" value="1"/>
</dbReference>
<dbReference type="Gene3D" id="1.10.510.10">
    <property type="entry name" value="Transferase(Phosphotransferase) domain 1"/>
    <property type="match status" value="1"/>
</dbReference>
<dbReference type="Gene3D" id="2.10.50.10">
    <property type="entry name" value="Tumor Necrosis Factor Receptor, subunit A, domain 2"/>
    <property type="match status" value="1"/>
</dbReference>
<dbReference type="InterPro" id="IPR027936">
    <property type="entry name" value="Eph_TM"/>
</dbReference>
<dbReference type="InterPro" id="IPR034245">
    <property type="entry name" value="EphB3_rcpt_lig-bd"/>
</dbReference>
<dbReference type="InterPro" id="IPR001090">
    <property type="entry name" value="Ephrin_rcpt_lig-bd_dom"/>
</dbReference>
<dbReference type="InterPro" id="IPR050449">
    <property type="entry name" value="Ephrin_rcpt_TKs"/>
</dbReference>
<dbReference type="InterPro" id="IPR003961">
    <property type="entry name" value="FN3_dom"/>
</dbReference>
<dbReference type="InterPro" id="IPR036116">
    <property type="entry name" value="FN3_sf"/>
</dbReference>
<dbReference type="InterPro" id="IPR008979">
    <property type="entry name" value="Galactose-bd-like_sf"/>
</dbReference>
<dbReference type="InterPro" id="IPR009030">
    <property type="entry name" value="Growth_fac_rcpt_cys_sf"/>
</dbReference>
<dbReference type="InterPro" id="IPR013783">
    <property type="entry name" value="Ig-like_fold"/>
</dbReference>
<dbReference type="InterPro" id="IPR011009">
    <property type="entry name" value="Kinase-like_dom_sf"/>
</dbReference>
<dbReference type="InterPro" id="IPR000719">
    <property type="entry name" value="Prot_kinase_dom"/>
</dbReference>
<dbReference type="InterPro" id="IPR017441">
    <property type="entry name" value="Protein_kinase_ATP_BS"/>
</dbReference>
<dbReference type="InterPro" id="IPR001660">
    <property type="entry name" value="SAM"/>
</dbReference>
<dbReference type="InterPro" id="IPR013761">
    <property type="entry name" value="SAM/pointed_sf"/>
</dbReference>
<dbReference type="InterPro" id="IPR001245">
    <property type="entry name" value="Ser-Thr/Tyr_kinase_cat_dom"/>
</dbReference>
<dbReference type="InterPro" id="IPR008266">
    <property type="entry name" value="Tyr_kinase_AS"/>
</dbReference>
<dbReference type="InterPro" id="IPR020635">
    <property type="entry name" value="Tyr_kinase_cat_dom"/>
</dbReference>
<dbReference type="InterPro" id="IPR016257">
    <property type="entry name" value="Tyr_kinase_ephrin_rcpt"/>
</dbReference>
<dbReference type="InterPro" id="IPR001426">
    <property type="entry name" value="Tyr_kinase_rcpt_V_CS"/>
</dbReference>
<dbReference type="PANTHER" id="PTHR46877">
    <property type="entry name" value="EPH RECEPTOR A5"/>
    <property type="match status" value="1"/>
</dbReference>
<dbReference type="PANTHER" id="PTHR46877:SF6">
    <property type="entry name" value="EPHRIN TYPE-B RECEPTOR 3"/>
    <property type="match status" value="1"/>
</dbReference>
<dbReference type="Pfam" id="PF14575">
    <property type="entry name" value="EphA2_TM"/>
    <property type="match status" value="1"/>
</dbReference>
<dbReference type="Pfam" id="PF01404">
    <property type="entry name" value="Ephrin_lbd"/>
    <property type="match status" value="1"/>
</dbReference>
<dbReference type="Pfam" id="PF00041">
    <property type="entry name" value="fn3"/>
    <property type="match status" value="2"/>
</dbReference>
<dbReference type="Pfam" id="PF07714">
    <property type="entry name" value="PK_Tyr_Ser-Thr"/>
    <property type="match status" value="1"/>
</dbReference>
<dbReference type="Pfam" id="PF00536">
    <property type="entry name" value="SAM_1"/>
    <property type="match status" value="1"/>
</dbReference>
<dbReference type="PIRSF" id="PIRSF000666">
    <property type="entry name" value="TyrPK_ephrin_receptor"/>
    <property type="match status" value="1"/>
</dbReference>
<dbReference type="PRINTS" id="PR00014">
    <property type="entry name" value="FNTYPEIII"/>
</dbReference>
<dbReference type="PRINTS" id="PR00109">
    <property type="entry name" value="TYRKINASE"/>
</dbReference>
<dbReference type="SMART" id="SM00615">
    <property type="entry name" value="EPH_lbd"/>
    <property type="match status" value="1"/>
</dbReference>
<dbReference type="SMART" id="SM01411">
    <property type="entry name" value="Ephrin_rec_like"/>
    <property type="match status" value="1"/>
</dbReference>
<dbReference type="SMART" id="SM00060">
    <property type="entry name" value="FN3"/>
    <property type="match status" value="2"/>
</dbReference>
<dbReference type="SMART" id="SM00454">
    <property type="entry name" value="SAM"/>
    <property type="match status" value="1"/>
</dbReference>
<dbReference type="SMART" id="SM00219">
    <property type="entry name" value="TyrKc"/>
    <property type="match status" value="1"/>
</dbReference>
<dbReference type="SUPFAM" id="SSF49265">
    <property type="entry name" value="Fibronectin type III"/>
    <property type="match status" value="1"/>
</dbReference>
<dbReference type="SUPFAM" id="SSF49785">
    <property type="entry name" value="Galactose-binding domain-like"/>
    <property type="match status" value="1"/>
</dbReference>
<dbReference type="SUPFAM" id="SSF57184">
    <property type="entry name" value="Growth factor receptor domain"/>
    <property type="match status" value="1"/>
</dbReference>
<dbReference type="SUPFAM" id="SSF56112">
    <property type="entry name" value="Protein kinase-like (PK-like)"/>
    <property type="match status" value="1"/>
</dbReference>
<dbReference type="SUPFAM" id="SSF47769">
    <property type="entry name" value="SAM/Pointed domain"/>
    <property type="match status" value="1"/>
</dbReference>
<dbReference type="PROSITE" id="PS51550">
    <property type="entry name" value="EPH_LBD"/>
    <property type="match status" value="1"/>
</dbReference>
<dbReference type="PROSITE" id="PS50853">
    <property type="entry name" value="FN3"/>
    <property type="match status" value="2"/>
</dbReference>
<dbReference type="PROSITE" id="PS00107">
    <property type="entry name" value="PROTEIN_KINASE_ATP"/>
    <property type="match status" value="1"/>
</dbReference>
<dbReference type="PROSITE" id="PS50011">
    <property type="entry name" value="PROTEIN_KINASE_DOM"/>
    <property type="match status" value="1"/>
</dbReference>
<dbReference type="PROSITE" id="PS00109">
    <property type="entry name" value="PROTEIN_KINASE_TYR"/>
    <property type="match status" value="1"/>
</dbReference>
<dbReference type="PROSITE" id="PS00790">
    <property type="entry name" value="RECEPTOR_TYR_KIN_V_1"/>
    <property type="match status" value="1"/>
</dbReference>
<dbReference type="PROSITE" id="PS00791">
    <property type="entry name" value="RECEPTOR_TYR_KIN_V_2"/>
    <property type="match status" value="1"/>
</dbReference>
<dbReference type="PROSITE" id="PS50105">
    <property type="entry name" value="SAM_DOMAIN"/>
    <property type="match status" value="1"/>
</dbReference>
<evidence type="ECO:0000250" key="1"/>
<evidence type="ECO:0000255" key="2"/>
<evidence type="ECO:0000255" key="3">
    <source>
        <dbReference type="PROSITE-ProRule" id="PRU00159"/>
    </source>
</evidence>
<evidence type="ECO:0000255" key="4">
    <source>
        <dbReference type="PROSITE-ProRule" id="PRU00184"/>
    </source>
</evidence>
<evidence type="ECO:0000255" key="5">
    <source>
        <dbReference type="PROSITE-ProRule" id="PRU00316"/>
    </source>
</evidence>
<evidence type="ECO:0000255" key="6">
    <source>
        <dbReference type="PROSITE-ProRule" id="PRU00883"/>
    </source>
</evidence>
<evidence type="ECO:0000255" key="7">
    <source>
        <dbReference type="PROSITE-ProRule" id="PRU10028"/>
    </source>
</evidence>
<evidence type="ECO:0000256" key="8">
    <source>
        <dbReference type="SAM" id="MobiDB-lite"/>
    </source>
</evidence>
<evidence type="ECO:0000303" key="9">
    <source>
    </source>
</evidence>
<reference key="1">
    <citation type="journal article" date="1993" name="Oncogene">
        <title>Five novel avian Eph-related tyrosine kinases are differentially expressed.</title>
        <authorList>
            <person name="Sajjadi F.G."/>
            <person name="Pasquale E.B."/>
        </authorList>
    </citation>
    <scope>NUCLEOTIDE SEQUENCE [MRNA] (ISOFORMS LONG AND SHORT)</scope>
    <source>
        <tissue>Embryo</tissue>
    </source>
</reference>
<comment type="function">
    <text evidence="1">Receptor tyrosine kinase which binds promiscuously transmembrane ephrin-B family ligands residing on adjacent cells, leading to contact-dependent bidirectional signaling into neighboring cells. The signaling pathway downstream of the receptor is referred to as forward signaling while the signaling pathway downstream of the ephrin ligand is referred to as reverse signaling. Generally has an overlapping and redundant function with EPHB2. Like EPHB2, functions in axon guidance during development. In addition to its role in axon guidance also plays an important redundant role with other ephrin-B receptors in development and maturation of dendritic spines and the formation of excitatory synapses. May control other aspects of development through regulation of cell migration and positioning (By similarity).</text>
</comment>
<comment type="catalytic activity">
    <reaction evidence="7">
        <text>L-tyrosyl-[protein] + ATP = O-phospho-L-tyrosyl-[protein] + ADP + H(+)</text>
        <dbReference type="Rhea" id="RHEA:10596"/>
        <dbReference type="Rhea" id="RHEA-COMP:10136"/>
        <dbReference type="Rhea" id="RHEA-COMP:20101"/>
        <dbReference type="ChEBI" id="CHEBI:15378"/>
        <dbReference type="ChEBI" id="CHEBI:30616"/>
        <dbReference type="ChEBI" id="CHEBI:46858"/>
        <dbReference type="ChEBI" id="CHEBI:61978"/>
        <dbReference type="ChEBI" id="CHEBI:456216"/>
        <dbReference type="EC" id="2.7.10.1"/>
    </reaction>
</comment>
<comment type="subunit">
    <text evidence="1">Heterotetramer upon binding of the ligand. The heterotetramer is composed of an ephrin dimer and a receptor dimer. Oligomerization is probably required to induce biological responses (By similarity).</text>
</comment>
<comment type="subcellular location">
    <subcellularLocation>
        <location evidence="1">Cell membrane</location>
        <topology evidence="1">Single-pass type I membrane protein</topology>
    </subcellularLocation>
    <subcellularLocation>
        <location evidence="1">Cell projection</location>
        <location evidence="1">Dendrite</location>
    </subcellularLocation>
</comment>
<comment type="alternative products">
    <event type="alternative splicing"/>
    <isoform>
        <id>Q07498-1</id>
        <name>Long</name>
        <sequence type="displayed"/>
    </isoform>
    <isoform>
        <id>Q07498-2</id>
        <name>Short</name>
        <sequence type="described" ref="VSP_003019"/>
    </isoform>
</comment>
<comment type="tissue specificity">
    <text>Present in 10-day embryonic brain and body tissues. Prominent expression in kidney. Lower expression in lung, and barely detectable in brain, liver, heart, skeletal muscle and thymus.</text>
</comment>
<comment type="PTM">
    <text evidence="1">Phosphorylated. Autophosphorylates upon ligand-binding. Autophosphorylation on Tyr-604 is required for interaction with SH2 domain-containing proteins (By similarity).</text>
</comment>
<comment type="similarity">
    <text evidence="3">Belongs to the protein kinase superfamily. Tyr protein kinase family. Ephrin receptor subfamily.</text>
</comment>
<gene>
    <name type="primary">EPHB3</name>
    <name type="synonym">CEK10</name>
</gene>
<organism>
    <name type="scientific">Gallus gallus</name>
    <name type="common">Chicken</name>
    <dbReference type="NCBI Taxonomy" id="9031"/>
    <lineage>
        <taxon>Eukaryota</taxon>
        <taxon>Metazoa</taxon>
        <taxon>Chordata</taxon>
        <taxon>Craniata</taxon>
        <taxon>Vertebrata</taxon>
        <taxon>Euteleostomi</taxon>
        <taxon>Archelosauria</taxon>
        <taxon>Archosauria</taxon>
        <taxon>Dinosauria</taxon>
        <taxon>Saurischia</taxon>
        <taxon>Theropoda</taxon>
        <taxon>Coelurosauria</taxon>
        <taxon>Aves</taxon>
        <taxon>Neognathae</taxon>
        <taxon>Galloanserae</taxon>
        <taxon>Galliformes</taxon>
        <taxon>Phasianidae</taxon>
        <taxon>Phasianinae</taxon>
        <taxon>Gallus</taxon>
    </lineage>
</organism>
<feature type="chain" id="PRO_0000160276" description="Ephrin type-B receptor 3">
    <location>
        <begin position="1" status="less than"/>
        <end position="988"/>
    </location>
</feature>
<feature type="topological domain" description="Extracellular" evidence="2">
    <location>
        <begin position="1" status="less than"/>
        <end position="534"/>
    </location>
</feature>
<feature type="transmembrane region" description="Helical" evidence="2">
    <location>
        <begin position="535"/>
        <end position="555"/>
    </location>
</feature>
<feature type="topological domain" description="Cytoplasmic" evidence="2">
    <location>
        <begin position="556"/>
        <end position="988"/>
    </location>
</feature>
<feature type="domain" description="Eph LBD" evidence="6">
    <location>
        <begin position="11"/>
        <end position="189"/>
    </location>
</feature>
<feature type="domain" description="Fibronectin type-III 1" evidence="5">
    <location>
        <begin position="311"/>
        <end position="424"/>
    </location>
</feature>
<feature type="domain" description="Fibronectin type-III 2" evidence="5">
    <location>
        <begin position="425"/>
        <end position="522"/>
    </location>
</feature>
<feature type="domain" description="Protein kinase" evidence="3">
    <location>
        <begin position="623"/>
        <end position="886"/>
    </location>
</feature>
<feature type="domain" description="SAM" evidence="4">
    <location>
        <begin position="915"/>
        <end position="979"/>
    </location>
</feature>
<feature type="region of interest" description="Disordered" evidence="8">
    <location>
        <begin position="1"/>
        <end position="24"/>
    </location>
</feature>
<feature type="short sequence motif" description="PDZ-binding" evidence="2">
    <location>
        <begin position="986"/>
        <end position="988"/>
    </location>
</feature>
<feature type="active site" description="Proton acceptor" evidence="3 7">
    <location>
        <position position="748"/>
    </location>
</feature>
<feature type="binding site" evidence="3">
    <location>
        <begin position="629"/>
        <end position="637"/>
    </location>
    <ligand>
        <name>ATP</name>
        <dbReference type="ChEBI" id="CHEBI:30616"/>
    </ligand>
</feature>
<feature type="binding site" evidence="3">
    <location>
        <position position="655"/>
    </location>
    <ligand>
        <name>ATP</name>
        <dbReference type="ChEBI" id="CHEBI:30616"/>
    </ligand>
</feature>
<feature type="modified residue" description="Phosphotyrosine; by autocatalysis" evidence="1">
    <location>
        <position position="604"/>
    </location>
</feature>
<feature type="glycosylation site" description="N-linked (GlcNAc...) asparagine" evidence="2">
    <location>
        <position position="323"/>
    </location>
</feature>
<feature type="glycosylation site" description="N-linked (GlcNAc...) asparagine" evidence="2">
    <location>
        <position position="418"/>
    </location>
</feature>
<feature type="disulfide bond" evidence="1">
    <location>
        <begin position="53"/>
        <end position="171"/>
    </location>
</feature>
<feature type="splice variant" id="VSP_003019" description="In isoform Short." evidence="9">
    <location>
        <begin position="558"/>
        <end position="572"/>
    </location>
</feature>
<feature type="non-terminal residue">
    <location>
        <position position="1"/>
    </location>
</feature>
<accession>Q07498</accession>
<sequence length="988" mass="109579">GVSSRARRPPGSSRSSRRGVTSELAWTTHPETGWEEVSGYDEAMNPIRTYQVCNVREANQNNWLRTKFIQRQDVQRVYVELKFTVRDCNSIPNIPGSCKETFNLFYYESDTDSASANSPFWMENPYIKVDTIAPDESFSKLESGRVNTKVRSFGPLSKNGFYLAFQDLGACMSLISVRAFYKKCSNTIAGFAIFPETLTGAEPTSLVIAPGTCIPNAVEVSVPLKLYCNGDGEWMVPVGACTCAAGYEPAMKDTQCQACGPGTFKSKQGEGPCSPCPPNSRTTAGAATVCICRSGFFRADADPADSACTSVPSAPRSVISNVNETSLVLEWSEPQDAGGRDDLLYNVICKKCSVERRLCSRCDDNVEFVPRQLGLTGLTERRIYISKVMAHPQYTFEIQAVNGISSKSPYPPHFASVNITTNQAAPSAVPTMHLHSSTGNSMTLSWTPPERPNGIILDYEIKYSEKQGQGDGIANTVTSQKNSVRLDGLKANARYMVQVRARTVAGYGRYSLPTEFQTTAEDGSTSKTFQELPLIVGSATAGLLFVIVVVIIAIVCFRKGMVTEQLLSSPLGRKQRNSTDPEYTEKLQQYVTPGMKVYIDPFTYEDPNEAVREFAKEIDISCVKIEEVIGAGEFGEVCRGRLKLPGRREIFVAIKTLKVGYTERQRRDFLSEASIMGQFDHPNIIHLEGVVTKSRPVMIITEFMENCALDSFLRLNDGQFTVIQLVGMLRGIAAGMKYLSEMNYVHRDLAARNILVNSNLVCKVSDFGLSRFLEDDPADPTYTSSLGGKIPIRWTAPEAIAYRKFTSASDVWSYGIVMWEVMSYGERPYWDMSNQDVINAVEQDYRLPPPMDCPTALHQLMLDCWVRDRNLRPKFAQIVNTLDKLIRNAASLKVIASVQSGVSQPLLDRTVPDYTTFTTVGDWLDAIKMGRYKENFVNAGFASFDLVAQMTAEDLLRIGVTLAGHQKKILSSIQDMRLQMNQTLPVQV</sequence>
<proteinExistence type="evidence at transcript level"/>
<keyword id="KW-0025">Alternative splicing</keyword>
<keyword id="KW-0067">ATP-binding</keyword>
<keyword id="KW-1003">Cell membrane</keyword>
<keyword id="KW-0966">Cell projection</keyword>
<keyword id="KW-0217">Developmental protein</keyword>
<keyword id="KW-1015">Disulfide bond</keyword>
<keyword id="KW-0325">Glycoprotein</keyword>
<keyword id="KW-0418">Kinase</keyword>
<keyword id="KW-0472">Membrane</keyword>
<keyword id="KW-0524">Neurogenesis</keyword>
<keyword id="KW-0547">Nucleotide-binding</keyword>
<keyword id="KW-0597">Phosphoprotein</keyword>
<keyword id="KW-0675">Receptor</keyword>
<keyword id="KW-1185">Reference proteome</keyword>
<keyword id="KW-0677">Repeat</keyword>
<keyword id="KW-0808">Transferase</keyword>
<keyword id="KW-0812">Transmembrane</keyword>
<keyword id="KW-1133">Transmembrane helix</keyword>
<keyword id="KW-0829">Tyrosine-protein kinase</keyword>
<protein>
    <recommendedName>
        <fullName>Ephrin type-B receptor 3</fullName>
        <ecNumber>2.7.10.1</ecNumber>
    </recommendedName>
    <alternativeName>
        <fullName>EPH-like kinase 10</fullName>
        <shortName>EK10</shortName>
        <shortName>cEK10</shortName>
    </alternativeName>
</protein>